<reference key="1">
    <citation type="journal article" date="2005" name="PLoS Biol.">
        <title>The genome sequence of Rickettsia felis identifies the first putative conjugative plasmid in an obligate intracellular parasite.</title>
        <authorList>
            <person name="Ogata H."/>
            <person name="Renesto P."/>
            <person name="Audic S."/>
            <person name="Robert C."/>
            <person name="Blanc G."/>
            <person name="Fournier P.-E."/>
            <person name="Parinello H."/>
            <person name="Claverie J.-M."/>
            <person name="Raoult D."/>
        </authorList>
    </citation>
    <scope>NUCLEOTIDE SEQUENCE [LARGE SCALE GENOMIC DNA]</scope>
    <source>
        <strain>ATCC VR-1525 / URRWXCal2</strain>
    </source>
</reference>
<name>BIOB_RICFE</name>
<feature type="chain" id="PRO_0000381590" description="Biotin synthase">
    <location>
        <begin position="1"/>
        <end position="309"/>
    </location>
</feature>
<feature type="domain" description="Radical SAM core" evidence="2">
    <location>
        <begin position="35"/>
        <end position="259"/>
    </location>
</feature>
<feature type="binding site" evidence="1">
    <location>
        <position position="50"/>
    </location>
    <ligand>
        <name>[4Fe-4S] cluster</name>
        <dbReference type="ChEBI" id="CHEBI:49883"/>
        <note>4Fe-4S-S-AdoMet</note>
    </ligand>
</feature>
<feature type="binding site" evidence="1">
    <location>
        <position position="54"/>
    </location>
    <ligand>
        <name>[4Fe-4S] cluster</name>
        <dbReference type="ChEBI" id="CHEBI:49883"/>
        <note>4Fe-4S-S-AdoMet</note>
    </ligand>
</feature>
<feature type="binding site" evidence="1">
    <location>
        <position position="57"/>
    </location>
    <ligand>
        <name>[4Fe-4S] cluster</name>
        <dbReference type="ChEBI" id="CHEBI:49883"/>
        <note>4Fe-4S-S-AdoMet</note>
    </ligand>
</feature>
<feature type="binding site" evidence="1">
    <location>
        <position position="94"/>
    </location>
    <ligand>
        <name>[2Fe-2S] cluster</name>
        <dbReference type="ChEBI" id="CHEBI:190135"/>
    </ligand>
</feature>
<feature type="binding site" evidence="1">
    <location>
        <position position="125"/>
    </location>
    <ligand>
        <name>[2Fe-2S] cluster</name>
        <dbReference type="ChEBI" id="CHEBI:190135"/>
    </ligand>
</feature>
<feature type="binding site" evidence="1">
    <location>
        <position position="185"/>
    </location>
    <ligand>
        <name>[2Fe-2S] cluster</name>
        <dbReference type="ChEBI" id="CHEBI:190135"/>
    </ligand>
</feature>
<feature type="binding site" evidence="1">
    <location>
        <position position="257"/>
    </location>
    <ligand>
        <name>[2Fe-2S] cluster</name>
        <dbReference type="ChEBI" id="CHEBI:190135"/>
    </ligand>
</feature>
<organism>
    <name type="scientific">Rickettsia felis (strain ATCC VR-1525 / URRWXCal2)</name>
    <name type="common">Rickettsia azadi</name>
    <dbReference type="NCBI Taxonomy" id="315456"/>
    <lineage>
        <taxon>Bacteria</taxon>
        <taxon>Pseudomonadati</taxon>
        <taxon>Pseudomonadota</taxon>
        <taxon>Alphaproteobacteria</taxon>
        <taxon>Rickettsiales</taxon>
        <taxon>Rickettsiaceae</taxon>
        <taxon>Rickettsieae</taxon>
        <taxon>Rickettsia</taxon>
        <taxon>spotted fever group</taxon>
    </lineage>
</organism>
<accession>Q4UM45</accession>
<comment type="function">
    <text evidence="1">Catalyzes the conversion of dethiobiotin (DTB) to biotin by the insertion of a sulfur atom into dethiobiotin via a radical-based mechanism.</text>
</comment>
<comment type="catalytic activity">
    <reaction evidence="1">
        <text>(4R,5S)-dethiobiotin + (sulfur carrier)-SH + 2 reduced [2Fe-2S]-[ferredoxin] + 2 S-adenosyl-L-methionine = (sulfur carrier)-H + biotin + 2 5'-deoxyadenosine + 2 L-methionine + 2 oxidized [2Fe-2S]-[ferredoxin]</text>
        <dbReference type="Rhea" id="RHEA:22060"/>
        <dbReference type="Rhea" id="RHEA-COMP:10000"/>
        <dbReference type="Rhea" id="RHEA-COMP:10001"/>
        <dbReference type="Rhea" id="RHEA-COMP:14737"/>
        <dbReference type="Rhea" id="RHEA-COMP:14739"/>
        <dbReference type="ChEBI" id="CHEBI:17319"/>
        <dbReference type="ChEBI" id="CHEBI:29917"/>
        <dbReference type="ChEBI" id="CHEBI:33737"/>
        <dbReference type="ChEBI" id="CHEBI:33738"/>
        <dbReference type="ChEBI" id="CHEBI:57586"/>
        <dbReference type="ChEBI" id="CHEBI:57844"/>
        <dbReference type="ChEBI" id="CHEBI:59789"/>
        <dbReference type="ChEBI" id="CHEBI:64428"/>
        <dbReference type="ChEBI" id="CHEBI:149473"/>
        <dbReference type="EC" id="2.8.1.6"/>
    </reaction>
</comment>
<comment type="cofactor">
    <cofactor evidence="1">
        <name>[4Fe-4S] cluster</name>
        <dbReference type="ChEBI" id="CHEBI:49883"/>
    </cofactor>
    <text evidence="1">Binds 1 [4Fe-4S] cluster. The cluster is coordinated with 3 cysteines and an exchangeable S-adenosyl-L-methionine.</text>
</comment>
<comment type="cofactor">
    <cofactor evidence="1">
        <name>[2Fe-2S] cluster</name>
        <dbReference type="ChEBI" id="CHEBI:190135"/>
    </cofactor>
    <text evidence="1">Binds 1 [2Fe-2S] cluster. The cluster is coordinated with 3 cysteines and 1 arginine.</text>
</comment>
<comment type="pathway">
    <text evidence="1">Cofactor biosynthesis; biotin biosynthesis; biotin from 7,8-diaminononanoate: step 2/2.</text>
</comment>
<comment type="subunit">
    <text evidence="1">Homodimer.</text>
</comment>
<comment type="similarity">
    <text evidence="1">Belongs to the radical SAM superfamily. Biotin synthase family.</text>
</comment>
<sequence>MKKWTFDEAKEIFSFSFMELVYQAQTIHRANFDPNKIQISSLLSIKTGSCPENCKFCPQSSHYKTYVKKEPLMQIEDVITAAKRAKAAGSTRFCMGAAWRGPRDEDLKLVCEMIKEVKKLGLETCVTLGLLKEHQAVTLKEAGLDFYNHNIDTSEEFYNKIITTRTFQDRLDTLRYVRASGMKVCCGGILGMGETNDDRINMILTLANLEEPAESVTINKLIKIPGTPLENVQDIDPFDFVRVIALARIMIPKSYIRLSAGREQMSDELQALCIMAGVYSIFYGEKILTSANPMPERDNDLFQKLGIIH</sequence>
<gene>
    <name evidence="1" type="primary">bioB</name>
    <name type="ordered locus">RF_0527</name>
</gene>
<protein>
    <recommendedName>
        <fullName evidence="1">Biotin synthase</fullName>
        <ecNumber evidence="1">2.8.1.6</ecNumber>
    </recommendedName>
</protein>
<keyword id="KW-0001">2Fe-2S</keyword>
<keyword id="KW-0004">4Fe-4S</keyword>
<keyword id="KW-0093">Biotin biosynthesis</keyword>
<keyword id="KW-0408">Iron</keyword>
<keyword id="KW-0411">Iron-sulfur</keyword>
<keyword id="KW-0479">Metal-binding</keyword>
<keyword id="KW-0949">S-adenosyl-L-methionine</keyword>
<keyword id="KW-0808">Transferase</keyword>
<evidence type="ECO:0000255" key="1">
    <source>
        <dbReference type="HAMAP-Rule" id="MF_01694"/>
    </source>
</evidence>
<evidence type="ECO:0000255" key="2">
    <source>
        <dbReference type="PROSITE-ProRule" id="PRU01266"/>
    </source>
</evidence>
<dbReference type="EC" id="2.8.1.6" evidence="1"/>
<dbReference type="EMBL" id="CP000053">
    <property type="protein sequence ID" value="AAY61378.1"/>
    <property type="molecule type" value="Genomic_DNA"/>
</dbReference>
<dbReference type="SMR" id="Q4UM45"/>
<dbReference type="STRING" id="315456.RF_0527"/>
<dbReference type="KEGG" id="rfe:RF_0527"/>
<dbReference type="eggNOG" id="COG0502">
    <property type="taxonomic scope" value="Bacteria"/>
</dbReference>
<dbReference type="HOGENOM" id="CLU_033172_1_2_5"/>
<dbReference type="OrthoDB" id="9786826at2"/>
<dbReference type="UniPathway" id="UPA00078">
    <property type="reaction ID" value="UER00162"/>
</dbReference>
<dbReference type="Proteomes" id="UP000008548">
    <property type="component" value="Chromosome"/>
</dbReference>
<dbReference type="GO" id="GO:0051537">
    <property type="term" value="F:2 iron, 2 sulfur cluster binding"/>
    <property type="evidence" value="ECO:0007669"/>
    <property type="project" value="UniProtKB-KW"/>
</dbReference>
<dbReference type="GO" id="GO:0051539">
    <property type="term" value="F:4 iron, 4 sulfur cluster binding"/>
    <property type="evidence" value="ECO:0007669"/>
    <property type="project" value="UniProtKB-KW"/>
</dbReference>
<dbReference type="GO" id="GO:0004076">
    <property type="term" value="F:biotin synthase activity"/>
    <property type="evidence" value="ECO:0007669"/>
    <property type="project" value="UniProtKB-UniRule"/>
</dbReference>
<dbReference type="GO" id="GO:0005506">
    <property type="term" value="F:iron ion binding"/>
    <property type="evidence" value="ECO:0007669"/>
    <property type="project" value="UniProtKB-UniRule"/>
</dbReference>
<dbReference type="GO" id="GO:0009102">
    <property type="term" value="P:biotin biosynthetic process"/>
    <property type="evidence" value="ECO:0007669"/>
    <property type="project" value="UniProtKB-UniRule"/>
</dbReference>
<dbReference type="CDD" id="cd01335">
    <property type="entry name" value="Radical_SAM"/>
    <property type="match status" value="1"/>
</dbReference>
<dbReference type="Gene3D" id="3.20.20.70">
    <property type="entry name" value="Aldolase class I"/>
    <property type="match status" value="1"/>
</dbReference>
<dbReference type="HAMAP" id="MF_01694">
    <property type="entry name" value="BioB"/>
    <property type="match status" value="1"/>
</dbReference>
<dbReference type="InterPro" id="IPR013785">
    <property type="entry name" value="Aldolase_TIM"/>
</dbReference>
<dbReference type="InterPro" id="IPR010722">
    <property type="entry name" value="BATS_dom"/>
</dbReference>
<dbReference type="InterPro" id="IPR002684">
    <property type="entry name" value="Biotin_synth/BioAB"/>
</dbReference>
<dbReference type="InterPro" id="IPR024177">
    <property type="entry name" value="Biotin_synthase"/>
</dbReference>
<dbReference type="InterPro" id="IPR006638">
    <property type="entry name" value="Elp3/MiaA/NifB-like_rSAM"/>
</dbReference>
<dbReference type="InterPro" id="IPR007197">
    <property type="entry name" value="rSAM"/>
</dbReference>
<dbReference type="NCBIfam" id="TIGR00433">
    <property type="entry name" value="bioB"/>
    <property type="match status" value="1"/>
</dbReference>
<dbReference type="PANTHER" id="PTHR22976">
    <property type="entry name" value="BIOTIN SYNTHASE"/>
    <property type="match status" value="1"/>
</dbReference>
<dbReference type="PANTHER" id="PTHR22976:SF2">
    <property type="entry name" value="BIOTIN SYNTHASE, MITOCHONDRIAL"/>
    <property type="match status" value="1"/>
</dbReference>
<dbReference type="Pfam" id="PF06968">
    <property type="entry name" value="BATS"/>
    <property type="match status" value="1"/>
</dbReference>
<dbReference type="Pfam" id="PF04055">
    <property type="entry name" value="Radical_SAM"/>
    <property type="match status" value="1"/>
</dbReference>
<dbReference type="PIRSF" id="PIRSF001619">
    <property type="entry name" value="Biotin_synth"/>
    <property type="match status" value="1"/>
</dbReference>
<dbReference type="SFLD" id="SFLDG01060">
    <property type="entry name" value="BATS_domain_containing"/>
    <property type="match status" value="1"/>
</dbReference>
<dbReference type="SFLD" id="SFLDF00272">
    <property type="entry name" value="biotin_synthase"/>
    <property type="match status" value="1"/>
</dbReference>
<dbReference type="SMART" id="SM00876">
    <property type="entry name" value="BATS"/>
    <property type="match status" value="1"/>
</dbReference>
<dbReference type="SMART" id="SM00729">
    <property type="entry name" value="Elp3"/>
    <property type="match status" value="1"/>
</dbReference>
<dbReference type="SUPFAM" id="SSF102114">
    <property type="entry name" value="Radical SAM enzymes"/>
    <property type="match status" value="1"/>
</dbReference>
<dbReference type="PROSITE" id="PS51918">
    <property type="entry name" value="RADICAL_SAM"/>
    <property type="match status" value="1"/>
</dbReference>
<proteinExistence type="inferred from homology"/>